<accession>A8MS41</accession>
<accession>Q304C9</accession>
<accession>Q3ED42</accession>
<accession>Q3ED43</accession>
<accession>Q84JM1</accession>
<accession>Q9C559</accession>
<sequence length="417" mass="47085">MFSSTTLHHLPRPNLLLPRKVISRRMSTNPAIEPKVRKFESVEGVDIGSRNKSDGFFAIPLYLSKLVALYNCISLSRIGTSNENFVFSGIRFRLVSYNILAQVYVKSALLPHSPPACLKWKARSHAILSVLKNLQADFFCLQEVDEYDSFYRNNMDSLGYSGIYIQRTGQRKRDGCAIFYKPSCAELVTKERIEYNDLVDSIKADSVSCSEQKIETSNEGKDSRKDSRDLNDPLVRLKRDCVGIMAAFRINKPFQHIVIVANTHLYWDPELADVKLAQAKYLLSRLAQFKTLISDEFECTPSLLLAGDFNSIPGDMVYSYLVSGNAKPTETIEEEEAPVPLSSVYEVTRGEPKFTNCTPGFTNTLDYIFISPSDFIKPVSILQLPEPDSPDVVGFLPNHHHPSDHLPIGAEFEIRRE</sequence>
<evidence type="ECO:0000250" key="1">
    <source>
        <dbReference type="UniProtKB" id="O95551"/>
    </source>
</evidence>
<evidence type="ECO:0000250" key="2">
    <source>
        <dbReference type="UniProtKB" id="P31384"/>
    </source>
</evidence>
<evidence type="ECO:0000269" key="3">
    <source>
    </source>
</evidence>
<evidence type="ECO:0000269" key="4">
    <source>
    </source>
</evidence>
<evidence type="ECO:0000303" key="5">
    <source>
    </source>
</evidence>
<evidence type="ECO:0000303" key="6">
    <source>
    </source>
</evidence>
<evidence type="ECO:0000303" key="7">
    <source>
    </source>
</evidence>
<evidence type="ECO:0000303" key="8">
    <source ref="5"/>
</evidence>
<evidence type="ECO:0000305" key="9"/>
<evidence type="ECO:0000312" key="10">
    <source>
        <dbReference type="Araport" id="AT1G31500"/>
    </source>
</evidence>
<evidence type="ECO:0000312" key="11">
    <source>
        <dbReference type="EMBL" id="AAG51276.1"/>
    </source>
</evidence>
<evidence type="ECO:0000312" key="12">
    <source>
        <dbReference type="EMBL" id="AAG60143.1"/>
    </source>
</evidence>
<evidence type="ECO:0007744" key="13">
    <source>
    </source>
</evidence>
<gene>
    <name evidence="9" type="primary">CCR4-4</name>
    <name evidence="7" type="synonym">HESP</name>
    <name evidence="10" type="ordered locus">At1g31500</name>
    <name evidence="12" type="ORF">F27M3_27</name>
    <name evidence="11" type="ORF">T8E3.7</name>
</gene>
<comment type="function">
    <text evidence="2 3">Acts as a catalytic component of the CCR4-NOT core complex, which in the nucleus seems to be a general transcription factor, and in the cytoplasm the major mRNA deadenylase involved in mRNA turnover (By similarity). Transcriptional regulator of circadian rhythms with poly(A)-degrading activity that affects the expression and rhythmicity of the clock core oscillator genes TOC1 and CCA1 (PubMed:26619288). Deadenylation may be a mechanism involved in the regulation of the circadian clock (PubMed:26619288). May play a negative role in response against oxidative stress (PubMed:26619288). Possesses magnesium-dependent poly(A)-specific exoribonuclease activity in vitro and is almost inactive with poly(U), poly(C) and poly(G) as substrates (PubMed:26619288).</text>
</comment>
<comment type="catalytic activity">
    <reaction evidence="3">
        <text>Exonucleolytic cleavage of poly(A) to 5'-AMP.</text>
        <dbReference type="EC" id="3.1.13.4"/>
    </reaction>
</comment>
<comment type="cofactor">
    <cofactor evidence="3">
        <name>Mg(2+)</name>
        <dbReference type="ChEBI" id="CHEBI:18420"/>
    </cofactor>
</comment>
<comment type="biophysicochemical properties">
    <phDependence>
        <text evidence="3">Optimum pH is 6.5.</text>
    </phDependence>
    <temperatureDependence>
        <text evidence="3">Optimum temperature is 25 degrees Celsius.</text>
    </temperatureDependence>
</comment>
<comment type="subunit">
    <text evidence="2 3">Component of the CCR4-NOT complex, at least composed of CRR4 and CAF1 proteins (By similarity). Forms homooligomers (PubMed:26619288).</text>
</comment>
<comment type="subcellular location">
    <subcellularLocation>
        <location evidence="2">Nucleus</location>
    </subcellularLocation>
    <subcellularLocation>
        <location evidence="4">Cytoplasm</location>
    </subcellularLocation>
</comment>
<comment type="alternative products">
    <event type="alternative splicing"/>
    <isoform>
        <id>A8MS41-1</id>
        <name>1</name>
        <sequence type="displayed"/>
    </isoform>
    <isoform>
        <id>A8MS41-2</id>
        <name>2</name>
        <sequence type="described" ref="VSP_035829 VSP_035830"/>
    </isoform>
    <isoform>
        <id>A8MS41-3</id>
        <name>3</name>
        <sequence type="described" ref="VSP_035828 VSP_035830"/>
    </isoform>
    <isoform>
        <id>A8MS41-4</id>
        <name>4</name>
        <sequence type="described" ref="VSP_035827 VSP_035831"/>
    </isoform>
    <isoform>
        <id>A8MS41-5</id>
        <name>5</name>
        <sequence type="described" ref="VSP_035830 VSP_035832"/>
    </isoform>
    <isoform>
        <id>A8MS41-6</id>
        <name>6</name>
        <sequence type="described" ref="VSP_035830"/>
    </isoform>
</comment>
<comment type="induction">
    <text evidence="3">Expressed with a high amplitude circadian rhythm showing a peak in the late day, just before night.</text>
</comment>
<comment type="disruption phenotype">
    <text evidence="3">No visible phenotype under normal growth conditions.</text>
</comment>
<comment type="miscellaneous">
    <text evidence="3">Plants overexpressing CCR4-4 exhibit retarded growth phenotype and severe reduction in root length that is attenuated over time.</text>
</comment>
<comment type="miscellaneous">
    <molecule>Isoform 4</molecule>
    <text evidence="9">May be due to intron retention.</text>
</comment>
<comment type="miscellaneous">
    <molecule>Isoform 5</molecule>
    <text evidence="9">May be due to intron retention.</text>
</comment>
<comment type="similarity">
    <text evidence="9">Belongs to the CCR4/nocturin family.</text>
</comment>
<comment type="sequence caution" evidence="9">
    <conflict type="erroneous gene model prediction">
        <sequence resource="EMBL-CDS" id="AAG51276"/>
    </conflict>
</comment>
<comment type="sequence caution" evidence="9">
    <conflict type="erroneous gene model prediction">
        <sequence resource="EMBL-CDS" id="AAG60143"/>
    </conflict>
</comment>
<comment type="sequence caution" evidence="9">
    <conflict type="miscellaneous discrepancy">
        <sequence resource="EMBL" id="BX815872"/>
    </conflict>
    <text>Sequencing errors.</text>
</comment>
<keyword id="KW-0007">Acetylation</keyword>
<keyword id="KW-0025">Alternative splicing</keyword>
<keyword id="KW-0090">Biological rhythms</keyword>
<keyword id="KW-0963">Cytoplasm</keyword>
<keyword id="KW-0269">Exonuclease</keyword>
<keyword id="KW-0378">Hydrolase</keyword>
<keyword id="KW-0460">Magnesium</keyword>
<keyword id="KW-0479">Metal-binding</keyword>
<keyword id="KW-0540">Nuclease</keyword>
<keyword id="KW-0539">Nucleus</keyword>
<keyword id="KW-1185">Reference proteome</keyword>
<keyword id="KW-0677">Repeat</keyword>
<keyword id="KW-0694">RNA-binding</keyword>
<keyword id="KW-0804">Transcription</keyword>
<keyword id="KW-0805">Transcription regulation</keyword>
<dbReference type="EC" id="3.1.13.4" evidence="3"/>
<dbReference type="EMBL" id="AC027135">
    <property type="protein sequence ID" value="AAG51276.1"/>
    <property type="status" value="ALT_SEQ"/>
    <property type="molecule type" value="Genomic_DNA"/>
</dbReference>
<dbReference type="EMBL" id="AC074360">
    <property type="protein sequence ID" value="AAG60143.1"/>
    <property type="status" value="ALT_SEQ"/>
    <property type="molecule type" value="Genomic_DNA"/>
</dbReference>
<dbReference type="EMBL" id="CP002684">
    <property type="protein sequence ID" value="AEE31362.1"/>
    <property type="molecule type" value="Genomic_DNA"/>
</dbReference>
<dbReference type="EMBL" id="CP002684">
    <property type="protein sequence ID" value="AEE31363.1"/>
    <property type="molecule type" value="Genomic_DNA"/>
</dbReference>
<dbReference type="EMBL" id="CP002684">
    <property type="protein sequence ID" value="AEE31364.1"/>
    <property type="molecule type" value="Genomic_DNA"/>
</dbReference>
<dbReference type="EMBL" id="CP002684">
    <property type="protein sequence ID" value="AEE31365.1"/>
    <property type="molecule type" value="Genomic_DNA"/>
</dbReference>
<dbReference type="EMBL" id="CP002684">
    <property type="protein sequence ID" value="ANM61087.1"/>
    <property type="molecule type" value="Genomic_DNA"/>
</dbReference>
<dbReference type="EMBL" id="BT005746">
    <property type="protein sequence ID" value="AAO64154.1"/>
    <property type="molecule type" value="mRNA"/>
</dbReference>
<dbReference type="EMBL" id="BT006109">
    <property type="protein sequence ID" value="AAP04094.1"/>
    <property type="molecule type" value="mRNA"/>
</dbReference>
<dbReference type="EMBL" id="BX813786">
    <property type="status" value="NOT_ANNOTATED_CDS"/>
    <property type="molecule type" value="mRNA"/>
</dbReference>
<dbReference type="EMBL" id="BX815872">
    <property type="status" value="NOT_ANNOTATED_CDS"/>
    <property type="molecule type" value="mRNA"/>
</dbReference>
<dbReference type="EMBL" id="BX814736">
    <property type="status" value="NOT_ANNOTATED_CDS"/>
    <property type="molecule type" value="mRNA"/>
</dbReference>
<dbReference type="EMBL" id="AK228566">
    <property type="protein sequence ID" value="BAF00485.1"/>
    <property type="molecule type" value="mRNA"/>
</dbReference>
<dbReference type="RefSeq" id="NP_001077640.1">
    <molecule id="A8MS41-1"/>
    <property type="nucleotide sequence ID" value="NM_001084171.2"/>
</dbReference>
<dbReference type="RefSeq" id="NP_001323327.1">
    <molecule id="A8MS41-6"/>
    <property type="nucleotide sequence ID" value="NM_001332964.1"/>
</dbReference>
<dbReference type="RefSeq" id="NP_174435.2">
    <molecule id="A8MS41-2"/>
    <property type="nucleotide sequence ID" value="NM_102889.5"/>
</dbReference>
<dbReference type="RefSeq" id="NP_973943.2">
    <molecule id="A8MS41-3"/>
    <property type="nucleotide sequence ID" value="NM_202214.3"/>
</dbReference>
<dbReference type="RefSeq" id="NP_973944.1">
    <molecule id="A8MS41-5"/>
    <property type="nucleotide sequence ID" value="NM_202215.3"/>
</dbReference>
<dbReference type="SMR" id="A8MS41"/>
<dbReference type="FunCoup" id="A8MS41">
    <property type="interactions" value="463"/>
</dbReference>
<dbReference type="STRING" id="3702.A8MS41"/>
<dbReference type="iPTMnet" id="A8MS41"/>
<dbReference type="PaxDb" id="3702-AT1G31500.4"/>
<dbReference type="EnsemblPlants" id="AT1G31500.1">
    <molecule id="A8MS41-2"/>
    <property type="protein sequence ID" value="AT1G31500.1"/>
    <property type="gene ID" value="AT1G31500"/>
</dbReference>
<dbReference type="EnsemblPlants" id="AT1G31500.2">
    <molecule id="A8MS41-3"/>
    <property type="protein sequence ID" value="AT1G31500.2"/>
    <property type="gene ID" value="AT1G31500"/>
</dbReference>
<dbReference type="EnsemblPlants" id="AT1G31500.3">
    <molecule id="A8MS41-5"/>
    <property type="protein sequence ID" value="AT1G31500.3"/>
    <property type="gene ID" value="AT1G31500"/>
</dbReference>
<dbReference type="EnsemblPlants" id="AT1G31500.4">
    <molecule id="A8MS41-1"/>
    <property type="protein sequence ID" value="AT1G31500.4"/>
    <property type="gene ID" value="AT1G31500"/>
</dbReference>
<dbReference type="EnsemblPlants" id="AT1G31500.5">
    <molecule id="A8MS41-6"/>
    <property type="protein sequence ID" value="AT1G31500.5"/>
    <property type="gene ID" value="AT1G31500"/>
</dbReference>
<dbReference type="GeneID" id="840040"/>
<dbReference type="Gramene" id="AT1G31500.1">
    <molecule id="A8MS41-2"/>
    <property type="protein sequence ID" value="AT1G31500.1"/>
    <property type="gene ID" value="AT1G31500"/>
</dbReference>
<dbReference type="Gramene" id="AT1G31500.2">
    <molecule id="A8MS41-3"/>
    <property type="protein sequence ID" value="AT1G31500.2"/>
    <property type="gene ID" value="AT1G31500"/>
</dbReference>
<dbReference type="Gramene" id="AT1G31500.3">
    <molecule id="A8MS41-5"/>
    <property type="protein sequence ID" value="AT1G31500.3"/>
    <property type="gene ID" value="AT1G31500"/>
</dbReference>
<dbReference type="Gramene" id="AT1G31500.4">
    <molecule id="A8MS41-1"/>
    <property type="protein sequence ID" value="AT1G31500.4"/>
    <property type="gene ID" value="AT1G31500"/>
</dbReference>
<dbReference type="Gramene" id="AT1G31500.5">
    <molecule id="A8MS41-6"/>
    <property type="protein sequence ID" value="AT1G31500.5"/>
    <property type="gene ID" value="AT1G31500"/>
</dbReference>
<dbReference type="KEGG" id="ath:AT1G31500"/>
<dbReference type="Araport" id="AT1G31500"/>
<dbReference type="TAIR" id="AT1G31500">
    <property type="gene designation" value="HESP"/>
</dbReference>
<dbReference type="eggNOG" id="KOG0620">
    <property type="taxonomic scope" value="Eukaryota"/>
</dbReference>
<dbReference type="InParanoid" id="A8MS41"/>
<dbReference type="OMA" id="RAACSMG"/>
<dbReference type="PhylomeDB" id="A8MS41"/>
<dbReference type="PRO" id="PR:A8MS41"/>
<dbReference type="Proteomes" id="UP000006548">
    <property type="component" value="Chromosome 1"/>
</dbReference>
<dbReference type="ExpressionAtlas" id="A8MS41">
    <property type="expression patterns" value="baseline and differential"/>
</dbReference>
<dbReference type="GO" id="GO:0009507">
    <property type="term" value="C:chloroplast"/>
    <property type="evidence" value="ECO:0000314"/>
    <property type="project" value="TAIR"/>
</dbReference>
<dbReference type="GO" id="GO:0005737">
    <property type="term" value="C:cytoplasm"/>
    <property type="evidence" value="ECO:0000314"/>
    <property type="project" value="TAIR"/>
</dbReference>
<dbReference type="GO" id="GO:0005634">
    <property type="term" value="C:nucleus"/>
    <property type="evidence" value="ECO:0007669"/>
    <property type="project" value="UniProtKB-SubCell"/>
</dbReference>
<dbReference type="GO" id="GO:0046872">
    <property type="term" value="F:metal ion binding"/>
    <property type="evidence" value="ECO:0007669"/>
    <property type="project" value="UniProtKB-KW"/>
</dbReference>
<dbReference type="GO" id="GO:0004535">
    <property type="term" value="F:poly(A)-specific ribonuclease activity"/>
    <property type="evidence" value="ECO:0007669"/>
    <property type="project" value="UniProtKB-EC"/>
</dbReference>
<dbReference type="GO" id="GO:0003723">
    <property type="term" value="F:RNA binding"/>
    <property type="evidence" value="ECO:0007669"/>
    <property type="project" value="UniProtKB-KW"/>
</dbReference>
<dbReference type="GO" id="GO:0004532">
    <property type="term" value="F:RNA exonuclease activity"/>
    <property type="evidence" value="ECO:0000314"/>
    <property type="project" value="TAIR"/>
</dbReference>
<dbReference type="GO" id="GO:0000289">
    <property type="term" value="P:nuclear-transcribed mRNA poly(A) tail shortening"/>
    <property type="evidence" value="ECO:0000314"/>
    <property type="project" value="TAIR"/>
</dbReference>
<dbReference type="GO" id="GO:0042752">
    <property type="term" value="P:regulation of circadian rhythm"/>
    <property type="evidence" value="ECO:0000315"/>
    <property type="project" value="TAIR"/>
</dbReference>
<dbReference type="GO" id="GO:0048511">
    <property type="term" value="P:rhythmic process"/>
    <property type="evidence" value="ECO:0007669"/>
    <property type="project" value="UniProtKB-KW"/>
</dbReference>
<dbReference type="FunFam" id="3.60.10.10:FF:000067">
    <property type="entry name" value="Carbon catabolite repressor protein 4 homolog 4"/>
    <property type="match status" value="1"/>
</dbReference>
<dbReference type="Gene3D" id="3.60.10.10">
    <property type="entry name" value="Endonuclease/exonuclease/phosphatase"/>
    <property type="match status" value="1"/>
</dbReference>
<dbReference type="InterPro" id="IPR050410">
    <property type="entry name" value="CCR4/nocturin_mRNA_transcr"/>
</dbReference>
<dbReference type="InterPro" id="IPR036691">
    <property type="entry name" value="Endo/exonu/phosph_ase_sf"/>
</dbReference>
<dbReference type="InterPro" id="IPR005135">
    <property type="entry name" value="Endo/exonuclease/phosphatase"/>
</dbReference>
<dbReference type="PANTHER" id="PTHR12121">
    <property type="entry name" value="CARBON CATABOLITE REPRESSOR PROTEIN 4"/>
    <property type="match status" value="1"/>
</dbReference>
<dbReference type="PANTHER" id="PTHR12121:SF68">
    <property type="entry name" value="CARBON CATABOLITE REPRESSOR PROTEIN 4 HOMOLOG 4-RELATED"/>
    <property type="match status" value="1"/>
</dbReference>
<dbReference type="Pfam" id="PF03372">
    <property type="entry name" value="Exo_endo_phos"/>
    <property type="match status" value="2"/>
</dbReference>
<dbReference type="SUPFAM" id="SSF56219">
    <property type="entry name" value="DNase I-like"/>
    <property type="match status" value="1"/>
</dbReference>
<protein>
    <recommendedName>
        <fullName evidence="9">Carbon catabolite repressor protein 4 homolog 4</fullName>
        <shortName evidence="9">CCR4 homolog 4</shortName>
        <ecNumber evidence="3">3.1.13.4</ecNumber>
    </recommendedName>
    <alternativeName>
        <fullName evidence="7">Protein HESPERIN</fullName>
        <shortName evidence="7">AtHESP</shortName>
        <shortName evidence="7">AtHesperin</shortName>
    </alternativeName>
</protein>
<name>CCR4D_ARATH</name>
<reference key="1">
    <citation type="journal article" date="2000" name="Nature">
        <title>Sequence and analysis of chromosome 1 of the plant Arabidopsis thaliana.</title>
        <authorList>
            <person name="Theologis A."/>
            <person name="Ecker J.R."/>
            <person name="Palm C.J."/>
            <person name="Federspiel N.A."/>
            <person name="Kaul S."/>
            <person name="White O."/>
            <person name="Alonso J."/>
            <person name="Altafi H."/>
            <person name="Araujo R."/>
            <person name="Bowman C.L."/>
            <person name="Brooks S.Y."/>
            <person name="Buehler E."/>
            <person name="Chan A."/>
            <person name="Chao Q."/>
            <person name="Chen H."/>
            <person name="Cheuk R.F."/>
            <person name="Chin C.W."/>
            <person name="Chung M.K."/>
            <person name="Conn L."/>
            <person name="Conway A.B."/>
            <person name="Conway A.R."/>
            <person name="Creasy T.H."/>
            <person name="Dewar K."/>
            <person name="Dunn P."/>
            <person name="Etgu P."/>
            <person name="Feldblyum T.V."/>
            <person name="Feng J.-D."/>
            <person name="Fong B."/>
            <person name="Fujii C.Y."/>
            <person name="Gill J.E."/>
            <person name="Goldsmith A.D."/>
            <person name="Haas B."/>
            <person name="Hansen N.F."/>
            <person name="Hughes B."/>
            <person name="Huizar L."/>
            <person name="Hunter J.L."/>
            <person name="Jenkins J."/>
            <person name="Johnson-Hopson C."/>
            <person name="Khan S."/>
            <person name="Khaykin E."/>
            <person name="Kim C.J."/>
            <person name="Koo H.L."/>
            <person name="Kremenetskaia I."/>
            <person name="Kurtz D.B."/>
            <person name="Kwan A."/>
            <person name="Lam B."/>
            <person name="Langin-Hooper S."/>
            <person name="Lee A."/>
            <person name="Lee J.M."/>
            <person name="Lenz C.A."/>
            <person name="Li J.H."/>
            <person name="Li Y.-P."/>
            <person name="Lin X."/>
            <person name="Liu S.X."/>
            <person name="Liu Z.A."/>
            <person name="Luros J.S."/>
            <person name="Maiti R."/>
            <person name="Marziali A."/>
            <person name="Militscher J."/>
            <person name="Miranda M."/>
            <person name="Nguyen M."/>
            <person name="Nierman W.C."/>
            <person name="Osborne B.I."/>
            <person name="Pai G."/>
            <person name="Peterson J."/>
            <person name="Pham P.K."/>
            <person name="Rizzo M."/>
            <person name="Rooney T."/>
            <person name="Rowley D."/>
            <person name="Sakano H."/>
            <person name="Salzberg S.L."/>
            <person name="Schwartz J.R."/>
            <person name="Shinn P."/>
            <person name="Southwick A.M."/>
            <person name="Sun H."/>
            <person name="Tallon L.J."/>
            <person name="Tambunga G."/>
            <person name="Toriumi M.J."/>
            <person name="Town C.D."/>
            <person name="Utterback T."/>
            <person name="Van Aken S."/>
            <person name="Vaysberg M."/>
            <person name="Vysotskaia V.S."/>
            <person name="Walker M."/>
            <person name="Wu D."/>
            <person name="Yu G."/>
            <person name="Fraser C.M."/>
            <person name="Venter J.C."/>
            <person name="Davis R.W."/>
        </authorList>
    </citation>
    <scope>NUCLEOTIDE SEQUENCE [LARGE SCALE GENOMIC DNA]</scope>
    <source>
        <strain>cv. Columbia</strain>
    </source>
</reference>
<reference key="2">
    <citation type="journal article" date="2017" name="Plant J.">
        <title>Araport11: a complete reannotation of the Arabidopsis thaliana reference genome.</title>
        <authorList>
            <person name="Cheng C.Y."/>
            <person name="Krishnakumar V."/>
            <person name="Chan A.P."/>
            <person name="Thibaud-Nissen F."/>
            <person name="Schobel S."/>
            <person name="Town C.D."/>
        </authorList>
    </citation>
    <scope>GENOME REANNOTATION</scope>
    <source>
        <strain>cv. Columbia</strain>
    </source>
</reference>
<reference key="3">
    <citation type="journal article" date="2003" name="Science">
        <title>Empirical analysis of transcriptional activity in the Arabidopsis genome.</title>
        <authorList>
            <person name="Yamada K."/>
            <person name="Lim J."/>
            <person name="Dale J.M."/>
            <person name="Chen H."/>
            <person name="Shinn P."/>
            <person name="Palm C.J."/>
            <person name="Southwick A.M."/>
            <person name="Wu H.C."/>
            <person name="Kim C.J."/>
            <person name="Nguyen M."/>
            <person name="Pham P.K."/>
            <person name="Cheuk R.F."/>
            <person name="Karlin-Newmann G."/>
            <person name="Liu S.X."/>
            <person name="Lam B."/>
            <person name="Sakano H."/>
            <person name="Wu T."/>
            <person name="Yu G."/>
            <person name="Miranda M."/>
            <person name="Quach H.L."/>
            <person name="Tripp M."/>
            <person name="Chang C.H."/>
            <person name="Lee J.M."/>
            <person name="Toriumi M.J."/>
            <person name="Chan M.M."/>
            <person name="Tang C.C."/>
            <person name="Onodera C.S."/>
            <person name="Deng J.M."/>
            <person name="Akiyama K."/>
            <person name="Ansari Y."/>
            <person name="Arakawa T."/>
            <person name="Banh J."/>
            <person name="Banno F."/>
            <person name="Bowser L."/>
            <person name="Brooks S.Y."/>
            <person name="Carninci P."/>
            <person name="Chao Q."/>
            <person name="Choy N."/>
            <person name="Enju A."/>
            <person name="Goldsmith A.D."/>
            <person name="Gurjal M."/>
            <person name="Hansen N.F."/>
            <person name="Hayashizaki Y."/>
            <person name="Johnson-Hopson C."/>
            <person name="Hsuan V.W."/>
            <person name="Iida K."/>
            <person name="Karnes M."/>
            <person name="Khan S."/>
            <person name="Koesema E."/>
            <person name="Ishida J."/>
            <person name="Jiang P.X."/>
            <person name="Jones T."/>
            <person name="Kawai J."/>
            <person name="Kamiya A."/>
            <person name="Meyers C."/>
            <person name="Nakajima M."/>
            <person name="Narusaka M."/>
            <person name="Seki M."/>
            <person name="Sakurai T."/>
            <person name="Satou M."/>
            <person name="Tamse R."/>
            <person name="Vaysberg M."/>
            <person name="Wallender E.K."/>
            <person name="Wong C."/>
            <person name="Yamamura Y."/>
            <person name="Yuan S."/>
            <person name="Shinozaki K."/>
            <person name="Davis R.W."/>
            <person name="Theologis A."/>
            <person name="Ecker J.R."/>
        </authorList>
    </citation>
    <scope>NUCLEOTIDE SEQUENCE [LARGE SCALE MRNA] (ISOFORM 4)</scope>
    <source>
        <strain>cv. Columbia</strain>
    </source>
</reference>
<reference key="4">
    <citation type="journal article" date="2004" name="Genome Res.">
        <title>Whole genome sequence comparisons and 'full-length' cDNA sequences: a combined approach to evaluate and improve Arabidopsis genome annotation.</title>
        <authorList>
            <person name="Castelli V."/>
            <person name="Aury J.-M."/>
            <person name="Jaillon O."/>
            <person name="Wincker P."/>
            <person name="Clepet C."/>
            <person name="Menard M."/>
            <person name="Cruaud C."/>
            <person name="Quetier F."/>
            <person name="Scarpelli C."/>
            <person name="Schaechter V."/>
            <person name="Temple G."/>
            <person name="Caboche M."/>
            <person name="Weissenbach J."/>
            <person name="Salanoubat M."/>
        </authorList>
    </citation>
    <scope>NUCLEOTIDE SEQUENCE [LARGE SCALE MRNA] (ISOFORMS 2; 5 AND 6)</scope>
    <source>
        <strain>cv. Columbia</strain>
    </source>
</reference>
<reference key="5">
    <citation type="submission" date="2006-07" db="EMBL/GenBank/DDBJ databases">
        <title>Large-scale analysis of RIKEN Arabidopsis full-length (RAFL) cDNAs.</title>
        <authorList>
            <person name="Totoki Y."/>
            <person name="Seki M."/>
            <person name="Ishida J."/>
            <person name="Nakajima M."/>
            <person name="Enju A."/>
            <person name="Kamiya A."/>
            <person name="Narusaka M."/>
            <person name="Shin-i T."/>
            <person name="Nakagawa M."/>
            <person name="Sakamoto N."/>
            <person name="Oishi K."/>
            <person name="Kohara Y."/>
            <person name="Kobayashi M."/>
            <person name="Toyoda A."/>
            <person name="Sakaki Y."/>
            <person name="Sakurai T."/>
            <person name="Iida K."/>
            <person name="Akiyama K."/>
            <person name="Satou M."/>
            <person name="Toyoda T."/>
            <person name="Konagaya A."/>
            <person name="Carninci P."/>
            <person name="Kawai J."/>
            <person name="Hayashizaki Y."/>
            <person name="Shinozaki K."/>
        </authorList>
    </citation>
    <scope>NUCLEOTIDE SEQUENCE [LARGE SCALE MRNA] (ISOFORM 4)</scope>
    <source>
        <strain>cv. Columbia</strain>
    </source>
</reference>
<reference key="6">
    <citation type="journal article" date="2012" name="Mol. Cell. Proteomics">
        <title>Comparative large-scale characterisation of plant vs. mammal proteins reveals similar and idiosyncratic N-alpha acetylation features.</title>
        <authorList>
            <person name="Bienvenut W.V."/>
            <person name="Sumpton D."/>
            <person name="Martinez A."/>
            <person name="Lilla S."/>
            <person name="Espagne C."/>
            <person name="Meinnel T."/>
            <person name="Giglione C."/>
        </authorList>
    </citation>
    <scope>ACETYLATION [LARGE SCALE ANALYSIS] AT SER-2 (ISOFORM 3)</scope>
    <scope>CLEAVAGE OF INITIATOR METHIONINE [LARGE SCALE ANALYSIS] (ISOFORM 3)</scope>
    <scope>IDENTIFICATION BY MASS SPECTROMETRY [LARGE SCALE ANALYSIS]</scope>
</reference>
<reference key="7">
    <citation type="journal article" date="2016" name="RNA Biol.">
        <title>AtHESPERIN: a novel regulator of circadian rhythms with poly(A)-degrading activity in plants.</title>
        <authorList>
            <person name="Delis C."/>
            <person name="Krokida A."/>
            <person name="Tomatsidou A."/>
            <person name="Tsikou D."/>
            <person name="Beta R.A."/>
            <person name="Tsioumpekou M."/>
            <person name="Moustaka J."/>
            <person name="Stravodimos G."/>
            <person name="Leonidas D.D."/>
            <person name="Balatsos N.A."/>
            <person name="Papadopoulou K.K."/>
        </authorList>
    </citation>
    <scope>FUNCTION</scope>
    <scope>CATALYTIC ACTIVITY</scope>
    <scope>COFACTOR</scope>
    <scope>SUBUNIT</scope>
    <scope>INDUCTION</scope>
    <scope>DISRUPTION PHENOTYPE</scope>
</reference>
<reference key="8">
    <citation type="journal article" date="2019" name="Plant Cell Physiol.">
        <title>Identification of Arabidopsis CCR4-NOT Complexes with Pumilio RNA-Binding Proteins, APUM5 and APUM2.</title>
        <authorList>
            <person name="Arae T."/>
            <person name="Morita K."/>
            <person name="Imahori R."/>
            <person name="Suzuki Y."/>
            <person name="Yasuda S."/>
            <person name="Sato T."/>
            <person name="Yamaguchi J."/>
            <person name="Chiba Y."/>
        </authorList>
    </citation>
    <scope>SUBCELLULAR LOCATION</scope>
</reference>
<feature type="chain" id="PRO_0000355047" description="Carbon catabolite repressor protein 4 homolog 4">
    <location>
        <begin position="1"/>
        <end position="417"/>
    </location>
</feature>
<feature type="binding site" evidence="1">
    <location>
        <position position="143"/>
    </location>
    <ligand>
        <name>Mg(2+)</name>
        <dbReference type="ChEBI" id="CHEBI:18420"/>
    </ligand>
</feature>
<feature type="splice variant" id="VSP_035827" description="In isoform 4." evidence="5 8">
    <location>
        <begin position="1"/>
        <end position="96"/>
    </location>
</feature>
<feature type="splice variant" id="VSP_035828" description="In isoform 3." evidence="9">
    <location>
        <begin position="1"/>
        <end position="25"/>
    </location>
</feature>
<feature type="splice variant" id="VSP_035829" description="In isoform 2." evidence="6">
    <original>P</original>
    <variation>PSSRVC</variation>
    <location>
        <position position="18"/>
    </location>
</feature>
<feature type="splice variant" id="VSP_035830" description="In isoform 2, isoform 3, isoform 5 and isoform 6." evidence="6">
    <location>
        <begin position="55"/>
        <end position="88"/>
    </location>
</feature>
<feature type="splice variant" id="VSP_035831" description="In isoform 4." evidence="5 8">
    <original>YNILAQVYVKSALLPHSPPACLK</original>
    <variation>MVLLKGLWFCSKCDLVFLFLCCR</variation>
    <location>
        <begin position="97"/>
        <end position="119"/>
    </location>
</feature>
<feature type="splice variant" id="VSP_035832" description="In isoform 5." evidence="6">
    <location>
        <begin position="318"/>
        <end position="417"/>
    </location>
</feature>
<feature type="sequence conflict" description="In Ref. 4; BX813786." evidence="9" ref="4">
    <original>H</original>
    <variation>Y</variation>
    <location>
        <position position="405"/>
    </location>
</feature>
<feature type="initiator methionine" description="Removed" evidence="13">
    <location sequence="A8MS41-3">
        <position position="1"/>
    </location>
</feature>
<feature type="modified residue" description="N-acetylserine" evidence="13">
    <location sequence="A8MS41-3">
        <position position="2"/>
    </location>
</feature>
<organism>
    <name type="scientific">Arabidopsis thaliana</name>
    <name type="common">Mouse-ear cress</name>
    <dbReference type="NCBI Taxonomy" id="3702"/>
    <lineage>
        <taxon>Eukaryota</taxon>
        <taxon>Viridiplantae</taxon>
        <taxon>Streptophyta</taxon>
        <taxon>Embryophyta</taxon>
        <taxon>Tracheophyta</taxon>
        <taxon>Spermatophyta</taxon>
        <taxon>Magnoliopsida</taxon>
        <taxon>eudicotyledons</taxon>
        <taxon>Gunneridae</taxon>
        <taxon>Pentapetalae</taxon>
        <taxon>rosids</taxon>
        <taxon>malvids</taxon>
        <taxon>Brassicales</taxon>
        <taxon>Brassicaceae</taxon>
        <taxon>Camelineae</taxon>
        <taxon>Arabidopsis</taxon>
    </lineage>
</organism>
<proteinExistence type="evidence at protein level"/>